<keyword id="KW-1048">Host nucleus</keyword>
<keyword id="KW-1185">Reference proteome</keyword>
<feature type="chain" id="PRO_0000417847" description="Protein UL79">
    <location>
        <begin position="1"/>
        <end position="295"/>
    </location>
</feature>
<feature type="region of interest" description="Disordered" evidence="2">
    <location>
        <begin position="243"/>
        <end position="273"/>
    </location>
</feature>
<feature type="compositionally biased region" description="Basic residues" evidence="2">
    <location>
        <begin position="245"/>
        <end position="261"/>
    </location>
</feature>
<dbReference type="EMBL" id="AY446894">
    <property type="protein sequence ID" value="AAR31631.1"/>
    <property type="molecule type" value="Genomic_DNA"/>
</dbReference>
<dbReference type="RefSeq" id="YP_081527.1">
    <property type="nucleotide sequence ID" value="NC_006273.2"/>
</dbReference>
<dbReference type="DNASU" id="3077474"/>
<dbReference type="GeneID" id="3077474"/>
<dbReference type="KEGG" id="vg:3077474"/>
<dbReference type="Reactome" id="R-HSA-9609690">
    <property type="pathway name" value="HCMV Early Events"/>
</dbReference>
<dbReference type="Reactome" id="R-HSA-9610379">
    <property type="pathway name" value="HCMV Late Events"/>
</dbReference>
<dbReference type="Proteomes" id="UP000000938">
    <property type="component" value="Segment"/>
</dbReference>
<dbReference type="GO" id="GO:0042025">
    <property type="term" value="C:host cell nucleus"/>
    <property type="evidence" value="ECO:0007669"/>
    <property type="project" value="UniProtKB-SubCell"/>
</dbReference>
<dbReference type="GO" id="GO:0072517">
    <property type="term" value="C:host cell viral assembly compartment"/>
    <property type="evidence" value="ECO:0000304"/>
    <property type="project" value="Reactome"/>
</dbReference>
<dbReference type="GO" id="GO:0019033">
    <property type="term" value="C:viral tegument"/>
    <property type="evidence" value="ECO:0000304"/>
    <property type="project" value="Reactome"/>
</dbReference>
<dbReference type="InterPro" id="IPR004290">
    <property type="entry name" value="Herpes_UL79"/>
</dbReference>
<dbReference type="Pfam" id="PF03049">
    <property type="entry name" value="Herpes_UL79"/>
    <property type="match status" value="1"/>
</dbReference>
<accession>Q6SW63</accession>
<accession>D2K3N7</accession>
<proteinExistence type="inferred from homology"/>
<organismHost>
    <name type="scientific">Homo sapiens</name>
    <name type="common">Human</name>
    <dbReference type="NCBI Taxonomy" id="9606"/>
</organismHost>
<name>UL79_HCMVM</name>
<gene>
    <name type="primary">UL79</name>
</gene>
<evidence type="ECO:0000250" key="1">
    <source>
        <dbReference type="UniProtKB" id="P16752"/>
    </source>
</evidence>
<evidence type="ECO:0000256" key="2">
    <source>
        <dbReference type="SAM" id="MobiDB-lite"/>
    </source>
</evidence>
<evidence type="ECO:0000305" key="3"/>
<organism>
    <name type="scientific">Human cytomegalovirus (strain Merlin)</name>
    <name type="common">HHV-5</name>
    <name type="synonym">Human herpesvirus 5</name>
    <dbReference type="NCBI Taxonomy" id="295027"/>
    <lineage>
        <taxon>Viruses</taxon>
        <taxon>Duplodnaviria</taxon>
        <taxon>Heunggongvirae</taxon>
        <taxon>Peploviricota</taxon>
        <taxon>Herviviricetes</taxon>
        <taxon>Herpesvirales</taxon>
        <taxon>Orthoherpesviridae</taxon>
        <taxon>Betaherpesvirinae</taxon>
        <taxon>Cytomegalovirus</taxon>
        <taxon>Cytomegalovirus humanbeta5</taxon>
        <taxon>Human cytomegalovirus</taxon>
    </lineage>
</organism>
<comment type="function">
    <text evidence="1">Plays a role in the expression of late transcripts bridging viral DNA replication and late gene expression during infection. Functions concordantly with UL87 to initiate transcription from over half of all active viral promoters in late infection, without affecting host transcription. Acts on and binds to viral early-late and late kinetic-class promoters.</text>
</comment>
<comment type="subcellular location">
    <subcellularLocation>
        <location evidence="1">Host nucleus</location>
    </subcellularLocation>
    <text evidence="1">Localizes in replication compartments during virus infection.</text>
</comment>
<comment type="similarity">
    <text evidence="3">Belongs to the herpesviridae UL79 family.</text>
</comment>
<sequence length="295" mass="33831">MMARDEENPAVPRVRTGKFSFTCANHLILQISEKMSRGQPLSSLRLEELKIVRLICVLLFHRGLETLLLRETMNNLGVSDHAVLSRKTPQPYWPHLYRELRQAFPGLDFEAAVFDETRAARLSQRLCHPRLSGGLLTRFVQRHTGLPVVFPEDLARNGNILFSLGTLYGHRLFRLAAFFTRHWGAEAYEPLIRIICQKMWYFYLIGTGKMRITPDAFDIQRSRHETGIFTFIMEDYRTFAGTLSRHPHRPHPQQQQHHHPGPPHPPLSHPASSCLSPEAVLAARALHMPTLANDV</sequence>
<reference key="1">
    <citation type="journal article" date="2004" name="J. Gen. Virol.">
        <title>Genetic content of wild-type human cytomegalovirus.</title>
        <authorList>
            <person name="Dolan A."/>
            <person name="Cunningham C."/>
            <person name="Hector R.D."/>
            <person name="Hassan-Walker A.F."/>
            <person name="Lee L."/>
            <person name="Addison C."/>
            <person name="Dargan D.J."/>
            <person name="McGeoch D.J."/>
            <person name="Gatherer D."/>
            <person name="Emery V.C."/>
            <person name="Griffiths P.D."/>
            <person name="Sinzger C."/>
            <person name="McSharry B.P."/>
            <person name="Wilkinson G.W.G."/>
            <person name="Davison A.J."/>
        </authorList>
    </citation>
    <scope>NUCLEOTIDE SEQUENCE [LARGE SCALE GENOMIC DNA]</scope>
</reference>
<protein>
    <recommendedName>
        <fullName>Protein UL79</fullName>
    </recommendedName>
</protein>